<name>NRDR_THEPX</name>
<organism>
    <name type="scientific">Thermoanaerobacter sp. (strain X514)</name>
    <dbReference type="NCBI Taxonomy" id="399726"/>
    <lineage>
        <taxon>Bacteria</taxon>
        <taxon>Bacillati</taxon>
        <taxon>Bacillota</taxon>
        <taxon>Clostridia</taxon>
        <taxon>Thermoanaerobacterales</taxon>
        <taxon>Thermoanaerobacteraceae</taxon>
        <taxon>Thermoanaerobacter</taxon>
    </lineage>
</organism>
<feature type="chain" id="PRO_1000124562" description="Transcriptional repressor NrdR">
    <location>
        <begin position="1"/>
        <end position="158"/>
    </location>
</feature>
<feature type="domain" description="ATP-cone" evidence="1">
    <location>
        <begin position="49"/>
        <end position="139"/>
    </location>
</feature>
<feature type="zinc finger region" evidence="1">
    <location>
        <begin position="3"/>
        <end position="34"/>
    </location>
</feature>
<comment type="function">
    <text evidence="1">Negatively regulates transcription of bacterial ribonucleotide reductase nrd genes and operons by binding to NrdR-boxes.</text>
</comment>
<comment type="cofactor">
    <cofactor evidence="1">
        <name>Zn(2+)</name>
        <dbReference type="ChEBI" id="CHEBI:29105"/>
    </cofactor>
    <text evidence="1">Binds 1 zinc ion.</text>
</comment>
<comment type="similarity">
    <text evidence="1">Belongs to the NrdR family.</text>
</comment>
<keyword id="KW-0067">ATP-binding</keyword>
<keyword id="KW-0238">DNA-binding</keyword>
<keyword id="KW-0479">Metal-binding</keyword>
<keyword id="KW-0547">Nucleotide-binding</keyword>
<keyword id="KW-0678">Repressor</keyword>
<keyword id="KW-0804">Transcription</keyword>
<keyword id="KW-0805">Transcription regulation</keyword>
<keyword id="KW-0862">Zinc</keyword>
<keyword id="KW-0863">Zinc-finger</keyword>
<dbReference type="EMBL" id="CP000923">
    <property type="protein sequence ID" value="ABY93270.1"/>
    <property type="molecule type" value="Genomic_DNA"/>
</dbReference>
<dbReference type="RefSeq" id="WP_009052539.1">
    <property type="nucleotide sequence ID" value="NC_010320.1"/>
</dbReference>
<dbReference type="SMR" id="B0K3F9"/>
<dbReference type="KEGG" id="tex:Teth514_1998"/>
<dbReference type="HOGENOM" id="CLU_108412_0_0_9"/>
<dbReference type="Proteomes" id="UP000002155">
    <property type="component" value="Chromosome"/>
</dbReference>
<dbReference type="GO" id="GO:0005524">
    <property type="term" value="F:ATP binding"/>
    <property type="evidence" value="ECO:0007669"/>
    <property type="project" value="UniProtKB-KW"/>
</dbReference>
<dbReference type="GO" id="GO:0003677">
    <property type="term" value="F:DNA binding"/>
    <property type="evidence" value="ECO:0007669"/>
    <property type="project" value="UniProtKB-KW"/>
</dbReference>
<dbReference type="GO" id="GO:0008270">
    <property type="term" value="F:zinc ion binding"/>
    <property type="evidence" value="ECO:0007669"/>
    <property type="project" value="UniProtKB-UniRule"/>
</dbReference>
<dbReference type="GO" id="GO:0045892">
    <property type="term" value="P:negative regulation of DNA-templated transcription"/>
    <property type="evidence" value="ECO:0007669"/>
    <property type="project" value="UniProtKB-UniRule"/>
</dbReference>
<dbReference type="HAMAP" id="MF_00440">
    <property type="entry name" value="NrdR"/>
    <property type="match status" value="1"/>
</dbReference>
<dbReference type="InterPro" id="IPR005144">
    <property type="entry name" value="ATP-cone_dom"/>
</dbReference>
<dbReference type="InterPro" id="IPR055173">
    <property type="entry name" value="NrdR-like_N"/>
</dbReference>
<dbReference type="InterPro" id="IPR003796">
    <property type="entry name" value="RNR_NrdR-like"/>
</dbReference>
<dbReference type="NCBIfam" id="TIGR00244">
    <property type="entry name" value="transcriptional regulator NrdR"/>
    <property type="match status" value="1"/>
</dbReference>
<dbReference type="PANTHER" id="PTHR30455">
    <property type="entry name" value="TRANSCRIPTIONAL REPRESSOR NRDR"/>
    <property type="match status" value="1"/>
</dbReference>
<dbReference type="PANTHER" id="PTHR30455:SF2">
    <property type="entry name" value="TRANSCRIPTIONAL REPRESSOR NRDR"/>
    <property type="match status" value="1"/>
</dbReference>
<dbReference type="Pfam" id="PF03477">
    <property type="entry name" value="ATP-cone"/>
    <property type="match status" value="1"/>
</dbReference>
<dbReference type="Pfam" id="PF22811">
    <property type="entry name" value="Zn_ribbon_NrdR"/>
    <property type="match status" value="1"/>
</dbReference>
<dbReference type="PROSITE" id="PS51161">
    <property type="entry name" value="ATP_CONE"/>
    <property type="match status" value="1"/>
</dbReference>
<reference key="1">
    <citation type="submission" date="2008-01" db="EMBL/GenBank/DDBJ databases">
        <title>Complete sequence of Thermoanaerobacter sp. X514.</title>
        <authorList>
            <consortium name="US DOE Joint Genome Institute"/>
            <person name="Copeland A."/>
            <person name="Lucas S."/>
            <person name="Lapidus A."/>
            <person name="Barry K."/>
            <person name="Glavina del Rio T."/>
            <person name="Dalin E."/>
            <person name="Tice H."/>
            <person name="Pitluck S."/>
            <person name="Bruce D."/>
            <person name="Goodwin L."/>
            <person name="Saunders E."/>
            <person name="Brettin T."/>
            <person name="Detter J.C."/>
            <person name="Han C."/>
            <person name="Schmutz J."/>
            <person name="Larimer F."/>
            <person name="Land M."/>
            <person name="Hauser L."/>
            <person name="Kyrpides N."/>
            <person name="Kim E."/>
            <person name="Hemme C."/>
            <person name="Fields M.W."/>
            <person name="He Z."/>
            <person name="Zhou J."/>
            <person name="Richardson P."/>
        </authorList>
    </citation>
    <scope>NUCLEOTIDE SEQUENCE [LARGE SCALE GENOMIC DNA]</scope>
    <source>
        <strain>X514</strain>
    </source>
</reference>
<evidence type="ECO:0000255" key="1">
    <source>
        <dbReference type="HAMAP-Rule" id="MF_00440"/>
    </source>
</evidence>
<proteinExistence type="inferred from homology"/>
<sequence length="158" mass="18721">MKCPYCGYPDSKVIDSRPTDDNTSIRRRRECLKCGKRFTTYEKVEQLPILVIKKDNRREVYDRDKILKGMIKACEKRPVPIKVLEEITDEIDKRIINSMEREITSTEIGEMVMEKLKNVDEVAYVRFASVYRQFKDINTFMDELKKLLKESETKKENA</sequence>
<gene>
    <name evidence="1" type="primary">nrdR</name>
    <name type="ordered locus">Teth514_1998</name>
</gene>
<protein>
    <recommendedName>
        <fullName evidence="1">Transcriptional repressor NrdR</fullName>
    </recommendedName>
</protein>
<accession>B0K3F9</accession>